<name>CSTF2_MOUSE</name>
<evidence type="ECO:0000250" key="1"/>
<evidence type="ECO:0000250" key="2">
    <source>
        <dbReference type="UniProtKB" id="P33240"/>
    </source>
</evidence>
<evidence type="ECO:0000255" key="3">
    <source>
        <dbReference type="PROSITE-ProRule" id="PRU00176"/>
    </source>
</evidence>
<evidence type="ECO:0000256" key="4">
    <source>
        <dbReference type="SAM" id="MobiDB-lite"/>
    </source>
</evidence>
<evidence type="ECO:0000269" key="5">
    <source>
    </source>
</evidence>
<evidence type="ECO:0000269" key="6">
    <source>
    </source>
</evidence>
<evidence type="ECO:0000269" key="7">
    <source>
    </source>
</evidence>
<evidence type="ECO:0000303" key="8">
    <source>
    </source>
</evidence>
<evidence type="ECO:0000305" key="9"/>
<protein>
    <recommendedName>
        <fullName>Cleavage stimulation factor subunit 2</fullName>
    </recommendedName>
    <alternativeName>
        <fullName>CF-1 64 kDa subunit</fullName>
    </alternativeName>
    <alternativeName>
        <fullName>Cleavage stimulation factor 64 kDa subunit</fullName>
        <shortName>CSTF 64 kDa subunit</shortName>
        <shortName>CstF-64</shortName>
    </alternativeName>
</protein>
<organism>
    <name type="scientific">Mus musculus</name>
    <name type="common">Mouse</name>
    <dbReference type="NCBI Taxonomy" id="10090"/>
    <lineage>
        <taxon>Eukaryota</taxon>
        <taxon>Metazoa</taxon>
        <taxon>Chordata</taxon>
        <taxon>Craniata</taxon>
        <taxon>Vertebrata</taxon>
        <taxon>Euteleostomi</taxon>
        <taxon>Mammalia</taxon>
        <taxon>Eutheria</taxon>
        <taxon>Euarchontoglires</taxon>
        <taxon>Glires</taxon>
        <taxon>Rodentia</taxon>
        <taxon>Myomorpha</taxon>
        <taxon>Muroidea</taxon>
        <taxon>Muridae</taxon>
        <taxon>Murinae</taxon>
        <taxon>Mus</taxon>
        <taxon>Mus</taxon>
    </lineage>
</organism>
<proteinExistence type="evidence at protein level"/>
<accession>Q8BIQ5</accession>
<accession>A2AEJ9</accession>
<accession>A2AEK0</accession>
<accession>Q8K1Y6</accession>
<accession>Q9ERC2</accession>
<sequence length="580" mass="61341">MAGLPVRDPAVDRSLRSVFVGNIPYEATEEQLKDIFSEVGPVVSFRLVYDRETGKPKGYGFCEYQDQETALSAMRNLNGREFSGRALRVDNAASEKNKEELKSLGTGAPVIESPYGESISPEDAPESISKAVASLPPEQMFELMKQMKLCVQNSPQEARNMLLQNPQLAYALLQAQVVMRIVDPEIALKILHRQTNIPTLISGNPQPVHVAGPGSGPNVSMNQQNPQAPQAQSLGGMHVNGAPPMMQASMPGGVPAPVQMAAAVGGPGPGSLAPAGVMQAQVGMQGAGPVPMERGQVPMQDPRAAMQRGALPTNVPTPRGLLGDAPNDPRGGTLMTVTGDVEPRAYLGPPPPPHQGPPMHHVPGHEGRGPPPHDMRGGPLAEPRPLMAEPRGPMLDQRGPPLDARGGRDPRGLDARGMEARAMEARGLDARGLEARAMEARAMEARAMEARAMEARAMEARAMEARGMDTRGPVPGPRGPMPSGIQGPNPMNMGAVVPQGSRQVPVMQGAGMQGASMQGGSQPGGFSPGQSQVTPQDHEKAALIMQVLQLTADQIAMLPPEQRQSILILKEQIQKSTGAP</sequence>
<comment type="function">
    <text evidence="2">One of the multiple factors required for polyadenylation and 3'-end cleavage of mammalian pre-mRNAs. This subunit is directly involved in the binding to pre-mRNAs (By similarity).</text>
</comment>
<comment type="subunit">
    <text evidence="1">The CSTF complex is composed of CSTF1 (50 kDa subunit), CSTF2 (64 kDa subunit) and CSTF3 (77 kDa subunit). CSTF2 directly interacts with CSTF3, SYMPK and RPO2TC1. Interacts with HSF1 in heat-stressed cells (By similarity). Interacts with CPSF2, CPSF3 and FIP1L1. Interacts with DDX1 (By similarity).</text>
</comment>
<comment type="subcellular location">
    <subcellularLocation>
        <location evidence="6">Nucleus</location>
    </subcellularLocation>
    <text evidence="2">Localized with DDX1 in cleavage bodies.</text>
</comment>
<comment type="alternative products">
    <event type="alternative splicing"/>
    <isoform>
        <id>Q8BIQ5-1</id>
        <name>1</name>
        <sequence type="displayed"/>
    </isoform>
    <isoform>
        <id>Q8BIQ5-2</id>
        <name>2</name>
        <sequence type="described" ref="VSP_014844 VSP_014845"/>
    </isoform>
</comment>
<comment type="tissue specificity">
    <text evidence="5 6">Expressed in most somatic cell types (at protein level). Highly expressed in testis, except in meiotic spermatocytes.</text>
</comment>
<comment type="induction">
    <text evidence="7">Up-regulated during the G to S phase transition.</text>
</comment>
<feature type="chain" id="PRO_0000081532" description="Cleavage stimulation factor subunit 2">
    <location>
        <begin position="1"/>
        <end position="580"/>
    </location>
</feature>
<feature type="domain" description="RRM" evidence="3">
    <location>
        <begin position="16"/>
        <end position="94"/>
    </location>
</feature>
<feature type="repeat" description="1; approximate">
    <location>
        <begin position="413"/>
        <end position="417"/>
    </location>
</feature>
<feature type="repeat" description="2">
    <location>
        <begin position="418"/>
        <end position="422"/>
    </location>
</feature>
<feature type="repeat" description="3">
    <location>
        <begin position="423"/>
        <end position="427"/>
    </location>
</feature>
<feature type="repeat" description="4; approximate">
    <location>
        <begin position="428"/>
        <end position="432"/>
    </location>
</feature>
<feature type="repeat" description="5; approximate">
    <location>
        <begin position="433"/>
        <end position="437"/>
    </location>
</feature>
<feature type="repeat" description="6">
    <location>
        <begin position="438"/>
        <end position="442"/>
    </location>
</feature>
<feature type="repeat" description="7">
    <location>
        <begin position="443"/>
        <end position="447"/>
    </location>
</feature>
<feature type="repeat" description="8">
    <location>
        <begin position="448"/>
        <end position="452"/>
    </location>
</feature>
<feature type="repeat" description="9">
    <location>
        <begin position="453"/>
        <end position="457"/>
    </location>
</feature>
<feature type="repeat" description="10">
    <location>
        <begin position="458"/>
        <end position="462"/>
    </location>
</feature>
<feature type="repeat" description="11">
    <location>
        <begin position="463"/>
        <end position="467"/>
    </location>
</feature>
<feature type="repeat" description="12; approximate">
    <location>
        <begin position="468"/>
        <end position="472"/>
    </location>
</feature>
<feature type="region of interest" description="Interactions with CSTF3 and SYMPK" evidence="1">
    <location>
        <begin position="108"/>
        <end position="248"/>
    </location>
</feature>
<feature type="region of interest" description="Disordered" evidence="4">
    <location>
        <begin position="311"/>
        <end position="331"/>
    </location>
</feature>
<feature type="region of interest" description="Disordered" evidence="4">
    <location>
        <begin position="347"/>
        <end position="414"/>
    </location>
</feature>
<feature type="region of interest" description="12 X 5 AA tandem repeats of M-E-A-R-[AG]">
    <location>
        <begin position="413"/>
        <end position="472"/>
    </location>
</feature>
<feature type="region of interest" description="Disordered" evidence="4">
    <location>
        <begin position="512"/>
        <end position="536"/>
    </location>
</feature>
<feature type="region of interest" description="Interaction with RPO2TC1" evidence="1">
    <location>
        <begin position="517"/>
        <end position="580"/>
    </location>
</feature>
<feature type="compositionally biased region" description="Basic and acidic residues" evidence="4">
    <location>
        <begin position="363"/>
        <end position="376"/>
    </location>
</feature>
<feature type="compositionally biased region" description="Basic and acidic residues" evidence="4">
    <location>
        <begin position="405"/>
        <end position="414"/>
    </location>
</feature>
<feature type="modified residue" description="Phosphoserine" evidence="2">
    <location>
        <position position="14"/>
    </location>
</feature>
<feature type="modified residue" description="Omega-N-methylarginine" evidence="2">
    <location>
        <position position="308"/>
    </location>
</feature>
<feature type="modified residue" description="Omega-N-methylarginine" evidence="2">
    <location>
        <position position="471"/>
    </location>
</feature>
<feature type="modified residue" description="Omega-N-methylarginine" evidence="2">
    <location>
        <position position="478"/>
    </location>
</feature>
<feature type="modified residue" description="Phosphoserine" evidence="2">
    <location>
        <position position="521"/>
    </location>
</feature>
<feature type="modified residue" description="Phosphoserine" evidence="2">
    <location>
        <position position="527"/>
    </location>
</feature>
<feature type="cross-link" description="Glycyl lysine isopeptide (Lys-Gly) (interchain with G-Cter in SUMO2)" evidence="2">
    <location>
        <position position="189"/>
    </location>
</feature>
<feature type="splice variant" id="VSP_014844" description="In isoform 2." evidence="8">
    <original>PVMQGA</original>
    <variation>MLVAYT</variation>
    <location>
        <begin position="505"/>
        <end position="510"/>
    </location>
</feature>
<feature type="splice variant" id="VSP_014845" description="In isoform 2." evidence="8">
    <location>
        <begin position="511"/>
        <end position="580"/>
    </location>
</feature>
<feature type="mutagenesis site" description="In hemizygous mice, it results in altered polyadenylation and 3'-end cleavage of pre-mRNAs critical for brain development.">
    <original>D</original>
    <variation>A</variation>
    <location>
        <position position="50"/>
    </location>
</feature>
<feature type="sequence conflict" description="In Ref. 2; BAC28037." evidence="9" ref="2">
    <original>M</original>
    <variation>V</variation>
    <location>
        <position position="299"/>
    </location>
</feature>
<keyword id="KW-0025">Alternative splicing</keyword>
<keyword id="KW-1017">Isopeptide bond</keyword>
<keyword id="KW-0488">Methylation</keyword>
<keyword id="KW-0507">mRNA processing</keyword>
<keyword id="KW-0539">Nucleus</keyword>
<keyword id="KW-0597">Phosphoprotein</keyword>
<keyword id="KW-1185">Reference proteome</keyword>
<keyword id="KW-0677">Repeat</keyword>
<keyword id="KW-0694">RNA-binding</keyword>
<keyword id="KW-0832">Ubl conjugation</keyword>
<gene>
    <name type="primary">Cstf2</name>
</gene>
<dbReference type="EMBL" id="AF317552">
    <property type="protein sequence ID" value="AAG31814.1"/>
    <property type="molecule type" value="mRNA"/>
</dbReference>
<dbReference type="EMBL" id="AK032817">
    <property type="protein sequence ID" value="BAC28037.1"/>
    <property type="molecule type" value="mRNA"/>
</dbReference>
<dbReference type="EMBL" id="AK088260">
    <property type="protein sequence ID" value="BAC40243.1"/>
    <property type="molecule type" value="mRNA"/>
</dbReference>
<dbReference type="EMBL" id="AL671915">
    <property type="status" value="NOT_ANNOTATED_CDS"/>
    <property type="molecule type" value="Genomic_DNA"/>
</dbReference>
<dbReference type="EMBL" id="BC036719">
    <property type="protein sequence ID" value="AAH36719.1"/>
    <property type="molecule type" value="mRNA"/>
</dbReference>
<dbReference type="CCDS" id="CCDS30389.1">
    <molecule id="Q8BIQ5-1"/>
</dbReference>
<dbReference type="CCDS" id="CCDS81170.1">
    <molecule id="Q8BIQ5-2"/>
</dbReference>
<dbReference type="RefSeq" id="NP_001277328.1">
    <molecule id="Q8BIQ5-2"/>
    <property type="nucleotide sequence ID" value="NM_001290399.1"/>
</dbReference>
<dbReference type="RefSeq" id="NP_573459.1">
    <molecule id="Q8BIQ5-1"/>
    <property type="nucleotide sequence ID" value="NM_133196.6"/>
</dbReference>
<dbReference type="BMRB" id="Q8BIQ5"/>
<dbReference type="SMR" id="Q8BIQ5"/>
<dbReference type="BioGRID" id="223801">
    <property type="interactions" value="8"/>
</dbReference>
<dbReference type="FunCoup" id="Q8BIQ5">
    <property type="interactions" value="3815"/>
</dbReference>
<dbReference type="IntAct" id="Q8BIQ5">
    <property type="interactions" value="2"/>
</dbReference>
<dbReference type="MINT" id="Q8BIQ5"/>
<dbReference type="STRING" id="10090.ENSMUSP00000033609"/>
<dbReference type="iPTMnet" id="Q8BIQ5"/>
<dbReference type="PhosphoSitePlus" id="Q8BIQ5"/>
<dbReference type="REPRODUCTION-2DPAGE" id="IPI00607981"/>
<dbReference type="jPOST" id="Q8BIQ5"/>
<dbReference type="PaxDb" id="10090-ENSMUSP00000033609"/>
<dbReference type="PeptideAtlas" id="Q8BIQ5"/>
<dbReference type="ProteomicsDB" id="285381">
    <molecule id="Q8BIQ5-1"/>
</dbReference>
<dbReference type="ProteomicsDB" id="285382">
    <molecule id="Q8BIQ5-2"/>
</dbReference>
<dbReference type="Pumba" id="Q8BIQ5"/>
<dbReference type="Antibodypedia" id="411">
    <property type="antibodies" value="335 antibodies from 32 providers"/>
</dbReference>
<dbReference type="DNASU" id="108062"/>
<dbReference type="Ensembl" id="ENSMUST00000033609.9">
    <molecule id="Q8BIQ5-1"/>
    <property type="protein sequence ID" value="ENSMUSP00000033609.3"/>
    <property type="gene ID" value="ENSMUSG00000031256.12"/>
</dbReference>
<dbReference type="Ensembl" id="ENSMUST00000113286.8">
    <molecule id="Q8BIQ5-2"/>
    <property type="protein sequence ID" value="ENSMUSP00000108911.2"/>
    <property type="gene ID" value="ENSMUSG00000031256.12"/>
</dbReference>
<dbReference type="GeneID" id="108062"/>
<dbReference type="KEGG" id="mmu:108062"/>
<dbReference type="UCSC" id="uc009ufi.2">
    <molecule id="Q8BIQ5-2"/>
    <property type="organism name" value="mouse"/>
</dbReference>
<dbReference type="UCSC" id="uc009ufj.2">
    <molecule id="Q8BIQ5-1"/>
    <property type="organism name" value="mouse"/>
</dbReference>
<dbReference type="AGR" id="MGI:1343054"/>
<dbReference type="CTD" id="1478"/>
<dbReference type="MGI" id="MGI:1343054">
    <property type="gene designation" value="Cstf2"/>
</dbReference>
<dbReference type="VEuPathDB" id="HostDB:ENSMUSG00000031256"/>
<dbReference type="eggNOG" id="KOG0108">
    <property type="taxonomic scope" value="Eukaryota"/>
</dbReference>
<dbReference type="GeneTree" id="ENSGT00940000158987"/>
<dbReference type="InParanoid" id="Q8BIQ5"/>
<dbReference type="OMA" id="NSQSMQM"/>
<dbReference type="OrthoDB" id="272703at2759"/>
<dbReference type="PhylomeDB" id="Q8BIQ5"/>
<dbReference type="TreeFam" id="TF314948"/>
<dbReference type="Reactome" id="R-MMU-72187">
    <property type="pathway name" value="mRNA 3'-end processing"/>
</dbReference>
<dbReference type="Reactome" id="R-MMU-72203">
    <property type="pathway name" value="Processing of Capped Intron-Containing Pre-mRNA"/>
</dbReference>
<dbReference type="Reactome" id="R-MMU-73856">
    <property type="pathway name" value="RNA Polymerase II Transcription Termination"/>
</dbReference>
<dbReference type="Reactome" id="R-MMU-77595">
    <property type="pathway name" value="Processing of Intronless Pre-mRNAs"/>
</dbReference>
<dbReference type="BioGRID-ORCS" id="108062">
    <property type="hits" value="12 hits in 82 CRISPR screens"/>
</dbReference>
<dbReference type="ChiTaRS" id="Cstf2">
    <property type="organism name" value="mouse"/>
</dbReference>
<dbReference type="PRO" id="PR:Q8BIQ5"/>
<dbReference type="Proteomes" id="UP000000589">
    <property type="component" value="Chromosome X"/>
</dbReference>
<dbReference type="RNAct" id="Q8BIQ5">
    <property type="molecule type" value="protein"/>
</dbReference>
<dbReference type="Bgee" id="ENSMUSG00000031256">
    <property type="expression patterns" value="Expressed in ventromedial nucleus of hypothalamus and 256 other cell types or tissues"/>
</dbReference>
<dbReference type="ExpressionAtlas" id="Q8BIQ5">
    <property type="expression patterns" value="baseline and differential"/>
</dbReference>
<dbReference type="GO" id="GO:0071920">
    <property type="term" value="C:cleavage body"/>
    <property type="evidence" value="ECO:0000250"/>
    <property type="project" value="UniProtKB"/>
</dbReference>
<dbReference type="GO" id="GO:0005847">
    <property type="term" value="C:mRNA cleavage and polyadenylation specificity factor complex"/>
    <property type="evidence" value="ECO:0000250"/>
    <property type="project" value="UniProtKB"/>
</dbReference>
<dbReference type="GO" id="GO:0005634">
    <property type="term" value="C:nucleus"/>
    <property type="evidence" value="ECO:0000250"/>
    <property type="project" value="UniProtKB"/>
</dbReference>
<dbReference type="GO" id="GO:0003723">
    <property type="term" value="F:RNA binding"/>
    <property type="evidence" value="ECO:0007669"/>
    <property type="project" value="UniProtKB-KW"/>
</dbReference>
<dbReference type="GO" id="GO:1990090">
    <property type="term" value="P:cellular response to nerve growth factor stimulus"/>
    <property type="evidence" value="ECO:0007669"/>
    <property type="project" value="Ensembl"/>
</dbReference>
<dbReference type="GO" id="GO:0031124">
    <property type="term" value="P:mRNA 3'-end processing"/>
    <property type="evidence" value="ECO:0000250"/>
    <property type="project" value="UniProtKB"/>
</dbReference>
<dbReference type="CDD" id="cd12671">
    <property type="entry name" value="RRM_CSTF2_CSTF2T"/>
    <property type="match status" value="1"/>
</dbReference>
<dbReference type="FunFam" id="1.10.20.70:FF:000001">
    <property type="entry name" value="Cleavage stimulation factor subunit 2"/>
    <property type="match status" value="1"/>
</dbReference>
<dbReference type="FunFam" id="1.25.40.630:FF:000001">
    <property type="entry name" value="Cleavage stimulation factor subunit 2"/>
    <property type="match status" value="1"/>
</dbReference>
<dbReference type="FunFam" id="3.30.70.330:FF:000061">
    <property type="entry name" value="cleavage stimulation factor subunit 2 isoform X1"/>
    <property type="match status" value="1"/>
</dbReference>
<dbReference type="Gene3D" id="1.25.40.630">
    <property type="match status" value="1"/>
</dbReference>
<dbReference type="Gene3D" id="3.30.70.330">
    <property type="match status" value="1"/>
</dbReference>
<dbReference type="Gene3D" id="1.10.20.70">
    <property type="entry name" value="Transcription termination and cleavage factor, C-terminal domain"/>
    <property type="match status" value="1"/>
</dbReference>
<dbReference type="InterPro" id="IPR025742">
    <property type="entry name" value="CSTF2_hinge"/>
</dbReference>
<dbReference type="InterPro" id="IPR026896">
    <property type="entry name" value="CSTF_C"/>
</dbReference>
<dbReference type="InterPro" id="IPR038192">
    <property type="entry name" value="CSTF_C_sf"/>
</dbReference>
<dbReference type="InterPro" id="IPR012677">
    <property type="entry name" value="Nucleotide-bd_a/b_plait_sf"/>
</dbReference>
<dbReference type="InterPro" id="IPR035979">
    <property type="entry name" value="RBD_domain_sf"/>
</dbReference>
<dbReference type="InterPro" id="IPR000504">
    <property type="entry name" value="RRM_dom"/>
</dbReference>
<dbReference type="PANTHER" id="PTHR45735">
    <property type="entry name" value="CLEAVAGE STIMULATION FACTOR SUBUNIT 2"/>
    <property type="match status" value="1"/>
</dbReference>
<dbReference type="PANTHER" id="PTHR45735:SF6">
    <property type="entry name" value="CLEAVAGE STIMULATION FACTOR SUBUNIT 2"/>
    <property type="match status" value="1"/>
</dbReference>
<dbReference type="Pfam" id="PF14327">
    <property type="entry name" value="CSTF2_hinge"/>
    <property type="match status" value="1"/>
</dbReference>
<dbReference type="Pfam" id="PF14304">
    <property type="entry name" value="CSTF_C"/>
    <property type="match status" value="1"/>
</dbReference>
<dbReference type="Pfam" id="PF00076">
    <property type="entry name" value="RRM_1"/>
    <property type="match status" value="1"/>
</dbReference>
<dbReference type="SMART" id="SM00360">
    <property type="entry name" value="RRM"/>
    <property type="match status" value="1"/>
</dbReference>
<dbReference type="SUPFAM" id="SSF54928">
    <property type="entry name" value="RNA-binding domain, RBD"/>
    <property type="match status" value="1"/>
</dbReference>
<dbReference type="PROSITE" id="PS50102">
    <property type="entry name" value="RRM"/>
    <property type="match status" value="1"/>
</dbReference>
<reference key="1">
    <citation type="journal article" date="2001" name="Biol. Reprod.">
        <title>Overexpression of the CstF-64 and CPSF-160 polyadenylation protein messenger RNAs in mouse male germ cells.</title>
        <authorList>
            <person name="Dass B."/>
            <person name="Attaya E.N."/>
            <person name="Michelle Wallace A."/>
            <person name="MacDonald C.C."/>
        </authorList>
    </citation>
    <scope>NUCLEOTIDE SEQUENCE [MRNA] (ISOFORM 1)</scope>
    <scope>TISSUE SPECIFICITY</scope>
    <source>
        <strain>CD-1</strain>
        <tissue>Testis</tissue>
    </source>
</reference>
<reference key="2">
    <citation type="journal article" date="2005" name="Science">
        <title>The transcriptional landscape of the mammalian genome.</title>
        <authorList>
            <person name="Carninci P."/>
            <person name="Kasukawa T."/>
            <person name="Katayama S."/>
            <person name="Gough J."/>
            <person name="Frith M.C."/>
            <person name="Maeda N."/>
            <person name="Oyama R."/>
            <person name="Ravasi T."/>
            <person name="Lenhard B."/>
            <person name="Wells C."/>
            <person name="Kodzius R."/>
            <person name="Shimokawa K."/>
            <person name="Bajic V.B."/>
            <person name="Brenner S.E."/>
            <person name="Batalov S."/>
            <person name="Forrest A.R."/>
            <person name="Zavolan M."/>
            <person name="Davis M.J."/>
            <person name="Wilming L.G."/>
            <person name="Aidinis V."/>
            <person name="Allen J.E."/>
            <person name="Ambesi-Impiombato A."/>
            <person name="Apweiler R."/>
            <person name="Aturaliya R.N."/>
            <person name="Bailey T.L."/>
            <person name="Bansal M."/>
            <person name="Baxter L."/>
            <person name="Beisel K.W."/>
            <person name="Bersano T."/>
            <person name="Bono H."/>
            <person name="Chalk A.M."/>
            <person name="Chiu K.P."/>
            <person name="Choudhary V."/>
            <person name="Christoffels A."/>
            <person name="Clutterbuck D.R."/>
            <person name="Crowe M.L."/>
            <person name="Dalla E."/>
            <person name="Dalrymple B.P."/>
            <person name="de Bono B."/>
            <person name="Della Gatta G."/>
            <person name="di Bernardo D."/>
            <person name="Down T."/>
            <person name="Engstrom P."/>
            <person name="Fagiolini M."/>
            <person name="Faulkner G."/>
            <person name="Fletcher C.F."/>
            <person name="Fukushima T."/>
            <person name="Furuno M."/>
            <person name="Futaki S."/>
            <person name="Gariboldi M."/>
            <person name="Georgii-Hemming P."/>
            <person name="Gingeras T.R."/>
            <person name="Gojobori T."/>
            <person name="Green R.E."/>
            <person name="Gustincich S."/>
            <person name="Harbers M."/>
            <person name="Hayashi Y."/>
            <person name="Hensch T.K."/>
            <person name="Hirokawa N."/>
            <person name="Hill D."/>
            <person name="Huminiecki L."/>
            <person name="Iacono M."/>
            <person name="Ikeo K."/>
            <person name="Iwama A."/>
            <person name="Ishikawa T."/>
            <person name="Jakt M."/>
            <person name="Kanapin A."/>
            <person name="Katoh M."/>
            <person name="Kawasawa Y."/>
            <person name="Kelso J."/>
            <person name="Kitamura H."/>
            <person name="Kitano H."/>
            <person name="Kollias G."/>
            <person name="Krishnan S.P."/>
            <person name="Kruger A."/>
            <person name="Kummerfeld S.K."/>
            <person name="Kurochkin I.V."/>
            <person name="Lareau L.F."/>
            <person name="Lazarevic D."/>
            <person name="Lipovich L."/>
            <person name="Liu J."/>
            <person name="Liuni S."/>
            <person name="McWilliam S."/>
            <person name="Madan Babu M."/>
            <person name="Madera M."/>
            <person name="Marchionni L."/>
            <person name="Matsuda H."/>
            <person name="Matsuzawa S."/>
            <person name="Miki H."/>
            <person name="Mignone F."/>
            <person name="Miyake S."/>
            <person name="Morris K."/>
            <person name="Mottagui-Tabar S."/>
            <person name="Mulder N."/>
            <person name="Nakano N."/>
            <person name="Nakauchi H."/>
            <person name="Ng P."/>
            <person name="Nilsson R."/>
            <person name="Nishiguchi S."/>
            <person name="Nishikawa S."/>
            <person name="Nori F."/>
            <person name="Ohara O."/>
            <person name="Okazaki Y."/>
            <person name="Orlando V."/>
            <person name="Pang K.C."/>
            <person name="Pavan W.J."/>
            <person name="Pavesi G."/>
            <person name="Pesole G."/>
            <person name="Petrovsky N."/>
            <person name="Piazza S."/>
            <person name="Reed J."/>
            <person name="Reid J.F."/>
            <person name="Ring B.Z."/>
            <person name="Ringwald M."/>
            <person name="Rost B."/>
            <person name="Ruan Y."/>
            <person name="Salzberg S.L."/>
            <person name="Sandelin A."/>
            <person name="Schneider C."/>
            <person name="Schoenbach C."/>
            <person name="Sekiguchi K."/>
            <person name="Semple C.A."/>
            <person name="Seno S."/>
            <person name="Sessa L."/>
            <person name="Sheng Y."/>
            <person name="Shibata Y."/>
            <person name="Shimada H."/>
            <person name="Shimada K."/>
            <person name="Silva D."/>
            <person name="Sinclair B."/>
            <person name="Sperling S."/>
            <person name="Stupka E."/>
            <person name="Sugiura K."/>
            <person name="Sultana R."/>
            <person name="Takenaka Y."/>
            <person name="Taki K."/>
            <person name="Tammoja K."/>
            <person name="Tan S.L."/>
            <person name="Tang S."/>
            <person name="Taylor M.S."/>
            <person name="Tegner J."/>
            <person name="Teichmann S.A."/>
            <person name="Ueda H.R."/>
            <person name="van Nimwegen E."/>
            <person name="Verardo R."/>
            <person name="Wei C.L."/>
            <person name="Yagi K."/>
            <person name="Yamanishi H."/>
            <person name="Zabarovsky E."/>
            <person name="Zhu S."/>
            <person name="Zimmer A."/>
            <person name="Hide W."/>
            <person name="Bult C."/>
            <person name="Grimmond S.M."/>
            <person name="Teasdale R.D."/>
            <person name="Liu E.T."/>
            <person name="Brusic V."/>
            <person name="Quackenbush J."/>
            <person name="Wahlestedt C."/>
            <person name="Mattick J.S."/>
            <person name="Hume D.A."/>
            <person name="Kai C."/>
            <person name="Sasaki D."/>
            <person name="Tomaru Y."/>
            <person name="Fukuda S."/>
            <person name="Kanamori-Katayama M."/>
            <person name="Suzuki M."/>
            <person name="Aoki J."/>
            <person name="Arakawa T."/>
            <person name="Iida J."/>
            <person name="Imamura K."/>
            <person name="Itoh M."/>
            <person name="Kato T."/>
            <person name="Kawaji H."/>
            <person name="Kawagashira N."/>
            <person name="Kawashima T."/>
            <person name="Kojima M."/>
            <person name="Kondo S."/>
            <person name="Konno H."/>
            <person name="Nakano K."/>
            <person name="Ninomiya N."/>
            <person name="Nishio T."/>
            <person name="Okada M."/>
            <person name="Plessy C."/>
            <person name="Shibata K."/>
            <person name="Shiraki T."/>
            <person name="Suzuki S."/>
            <person name="Tagami M."/>
            <person name="Waki K."/>
            <person name="Watahiki A."/>
            <person name="Okamura-Oho Y."/>
            <person name="Suzuki H."/>
            <person name="Kawai J."/>
            <person name="Hayashizaki Y."/>
        </authorList>
    </citation>
    <scope>NUCLEOTIDE SEQUENCE [LARGE SCALE MRNA] (ISOFORM 1)</scope>
    <source>
        <strain>C57BL/6J</strain>
        <tissue>Thymus</tissue>
        <tissue>Wolffian duct</tissue>
    </source>
</reference>
<reference key="3">
    <citation type="journal article" date="2009" name="PLoS Biol.">
        <title>Lineage-specific biology revealed by a finished genome assembly of the mouse.</title>
        <authorList>
            <person name="Church D.M."/>
            <person name="Goodstadt L."/>
            <person name="Hillier L.W."/>
            <person name="Zody M.C."/>
            <person name="Goldstein S."/>
            <person name="She X."/>
            <person name="Bult C.J."/>
            <person name="Agarwala R."/>
            <person name="Cherry J.L."/>
            <person name="DiCuccio M."/>
            <person name="Hlavina W."/>
            <person name="Kapustin Y."/>
            <person name="Meric P."/>
            <person name="Maglott D."/>
            <person name="Birtle Z."/>
            <person name="Marques A.C."/>
            <person name="Graves T."/>
            <person name="Zhou S."/>
            <person name="Teague B."/>
            <person name="Potamousis K."/>
            <person name="Churas C."/>
            <person name="Place M."/>
            <person name="Herschleb J."/>
            <person name="Runnheim R."/>
            <person name="Forrest D."/>
            <person name="Amos-Landgraf J."/>
            <person name="Schwartz D.C."/>
            <person name="Cheng Z."/>
            <person name="Lindblad-Toh K."/>
            <person name="Eichler E.E."/>
            <person name="Ponting C.P."/>
        </authorList>
    </citation>
    <scope>NUCLEOTIDE SEQUENCE [LARGE SCALE GENOMIC DNA]</scope>
    <source>
        <strain>C57BL/6J</strain>
    </source>
</reference>
<reference key="4">
    <citation type="journal article" date="2004" name="Genome Res.">
        <title>The status, quality, and expansion of the NIH full-length cDNA project: the Mammalian Gene Collection (MGC).</title>
        <authorList>
            <consortium name="The MGC Project Team"/>
        </authorList>
    </citation>
    <scope>NUCLEOTIDE SEQUENCE [LARGE SCALE MRNA] (ISOFORM 2)</scope>
    <source>
        <strain>FVB/N</strain>
        <tissue>Mammary gland</tissue>
    </source>
</reference>
<reference key="5">
    <citation type="journal article" date="1998" name="Proc. Natl. Acad. Sci. U.S.A.">
        <title>Increase in the 64-kDa subunit of the polyadenylation/cleavage stimulatory factor during the G0 to S phase transition.</title>
        <authorList>
            <person name="Martincic K."/>
            <person name="Campbell R."/>
            <person name="Edwalds-Gilbert G."/>
            <person name="Souan L."/>
            <person name="Lotze M.T."/>
            <person name="Milcarek C."/>
        </authorList>
    </citation>
    <scope>INDUCTION</scope>
</reference>
<reference key="6">
    <citation type="journal article" date="2004" name="Biol. Reprod.">
        <title>Developmental distribution of the polyadenylation protein CstF-64 and the variant tauCstF-64 in mouse and rat testis.</title>
        <authorList>
            <person name="Wallace A.M."/>
            <person name="Denison T.L."/>
            <person name="Attaya E.N."/>
            <person name="MacDonald C.C."/>
        </authorList>
    </citation>
    <scope>TISSUE SPECIFICITY</scope>
    <scope>SUBCELLULAR LOCATION</scope>
</reference>
<reference key="7">
    <citation type="journal article" date="2010" name="Cell">
        <title>A tissue-specific atlas of mouse protein phosphorylation and expression.</title>
        <authorList>
            <person name="Huttlin E.L."/>
            <person name="Jedrychowski M.P."/>
            <person name="Elias J.E."/>
            <person name="Goswami T."/>
            <person name="Rad R."/>
            <person name="Beausoleil S.A."/>
            <person name="Villen J."/>
            <person name="Haas W."/>
            <person name="Sowa M.E."/>
            <person name="Gygi S.P."/>
        </authorList>
    </citation>
    <scope>IDENTIFICATION BY MASS SPECTROMETRY [LARGE SCALE ANALYSIS]</scope>
    <source>
        <tissue>Brain</tissue>
        <tissue>Brown adipose tissue</tissue>
        <tissue>Heart</tissue>
        <tissue>Kidney</tissue>
        <tissue>Liver</tissue>
        <tissue>Lung</tissue>
        <tissue>Pancreas</tissue>
        <tissue>Spleen</tissue>
        <tissue>Testis</tissue>
    </source>
</reference>
<reference key="8">
    <citation type="journal article" date="2020" name="Nucleic Acids Res.">
        <title>A missense mutation in the CSTF2 gene that impairs the function of the RNA recognition motif and causes defects in 3' end processing is associated with intellectual disability in humans.</title>
        <authorList>
            <person name="Grozdanov P.N."/>
            <person name="Masoumzadeh E."/>
            <person name="Kalscheuer V.M."/>
            <person name="Bienvenu T."/>
            <person name="Billuart P."/>
            <person name="Delrue M.A."/>
            <person name="Latham M.P."/>
            <person name="MacDonald C.C."/>
        </authorList>
    </citation>
    <scope>MUTAGENESIS OF ASP-50</scope>
</reference>